<organism>
    <name type="scientific">Aspergillus clavatus (strain ATCC 1007 / CBS 513.65 / DSM 816 / NCTC 3887 / NRRL 1 / QM 1276 / 107)</name>
    <dbReference type="NCBI Taxonomy" id="344612"/>
    <lineage>
        <taxon>Eukaryota</taxon>
        <taxon>Fungi</taxon>
        <taxon>Dikarya</taxon>
        <taxon>Ascomycota</taxon>
        <taxon>Pezizomycotina</taxon>
        <taxon>Eurotiomycetes</taxon>
        <taxon>Eurotiomycetidae</taxon>
        <taxon>Eurotiales</taxon>
        <taxon>Aspergillaceae</taxon>
        <taxon>Aspergillus</taxon>
        <taxon>Aspergillus subgen. Fumigati</taxon>
    </lineage>
</organism>
<gene>
    <name type="primary">manF</name>
    <name type="ORF">ACLA_044470</name>
</gene>
<feature type="signal peptide" evidence="4">
    <location>
        <begin position="1"/>
        <end position="18"/>
    </location>
</feature>
<feature type="chain" id="PRO_0000393712" description="Mannan endo-1,4-beta-mannosidase F">
    <location>
        <begin position="19"/>
        <end position="436"/>
    </location>
</feature>
<feature type="domain" description="CBM1" evidence="5">
    <location>
        <begin position="19"/>
        <end position="54"/>
    </location>
</feature>
<feature type="region of interest" description="Disordered" evidence="6">
    <location>
        <begin position="60"/>
        <end position="88"/>
    </location>
</feature>
<feature type="region of interest" description="Ser-rich linker">
    <location>
        <begin position="79"/>
        <end position="113"/>
    </location>
</feature>
<feature type="region of interest" description="Catalytic">
    <location>
        <begin position="114"/>
        <end position="436"/>
    </location>
</feature>
<feature type="active site" description="Proton donor" evidence="3">
    <location>
        <position position="261"/>
    </location>
</feature>
<feature type="active site" description="Nucleophile" evidence="3">
    <location>
        <position position="370"/>
    </location>
</feature>
<feature type="binding site" evidence="2">
    <location>
        <position position="146"/>
    </location>
    <ligand>
        <name>substrate</name>
    </ligand>
</feature>
<feature type="binding site" evidence="2">
    <location>
        <position position="260"/>
    </location>
    <ligand>
        <name>substrate</name>
    </ligand>
</feature>
<feature type="binding site" evidence="2">
    <location>
        <position position="336"/>
    </location>
    <ligand>
        <name>substrate</name>
    </ligand>
</feature>
<feature type="binding site" evidence="2">
    <location>
        <position position="400"/>
    </location>
    <ligand>
        <name>substrate</name>
    </ligand>
</feature>
<proteinExistence type="inferred from homology"/>
<comment type="function">
    <text evidence="1">Endo-1,4-mannanase, a crucial enzyme for depolymerization of seed galactomannans and wood galactoglucomannans.</text>
</comment>
<comment type="catalytic activity">
    <reaction>
        <text>Random hydrolysis of (1-&gt;4)-beta-D-mannosidic linkages in mannans, galactomannans and glucomannans.</text>
        <dbReference type="EC" id="3.2.1.78"/>
    </reaction>
</comment>
<comment type="subcellular location">
    <subcellularLocation>
        <location evidence="1">Secreted</location>
    </subcellularLocation>
</comment>
<comment type="domain">
    <text>Has a modular structure: a carbohydrate-binding module (CBM) at the N-terminus, a linker rich in serines, and a C-terminal endo-1,4-mannanase catalytic module. The genes for catalytic modules and CBMs seem to have evolved separately and have been linked by gene fusion.</text>
</comment>
<comment type="similarity">
    <text evidence="7">Belongs to the glycosyl hydrolase 5 (cellulase A) family.</text>
</comment>
<reference key="1">
    <citation type="journal article" date="2008" name="PLoS Genet.">
        <title>Genomic islands in the pathogenic filamentous fungus Aspergillus fumigatus.</title>
        <authorList>
            <person name="Fedorova N.D."/>
            <person name="Khaldi N."/>
            <person name="Joardar V.S."/>
            <person name="Maiti R."/>
            <person name="Amedeo P."/>
            <person name="Anderson M.J."/>
            <person name="Crabtree J."/>
            <person name="Silva J.C."/>
            <person name="Badger J.H."/>
            <person name="Albarraq A."/>
            <person name="Angiuoli S."/>
            <person name="Bussey H."/>
            <person name="Bowyer P."/>
            <person name="Cotty P.J."/>
            <person name="Dyer P.S."/>
            <person name="Egan A."/>
            <person name="Galens K."/>
            <person name="Fraser-Liggett C.M."/>
            <person name="Haas B.J."/>
            <person name="Inman J.M."/>
            <person name="Kent R."/>
            <person name="Lemieux S."/>
            <person name="Malavazi I."/>
            <person name="Orvis J."/>
            <person name="Roemer T."/>
            <person name="Ronning C.M."/>
            <person name="Sundaram J.P."/>
            <person name="Sutton G."/>
            <person name="Turner G."/>
            <person name="Venter J.C."/>
            <person name="White O.R."/>
            <person name="Whitty B.R."/>
            <person name="Youngman P."/>
            <person name="Wolfe K.H."/>
            <person name="Goldman G.H."/>
            <person name="Wortman J.R."/>
            <person name="Jiang B."/>
            <person name="Denning D.W."/>
            <person name="Nierman W.C."/>
        </authorList>
    </citation>
    <scope>NUCLEOTIDE SEQUENCE [LARGE SCALE GENOMIC DNA]</scope>
    <source>
        <strain>ATCC 1007 / CBS 513.65 / DSM 816 / NCTC 3887 / NRRL 1 / QM 1276 / 107</strain>
    </source>
</reference>
<dbReference type="EC" id="3.2.1.78"/>
<dbReference type="EMBL" id="DS027046">
    <property type="protein sequence ID" value="EAW13727.1"/>
    <property type="molecule type" value="Genomic_DNA"/>
</dbReference>
<dbReference type="RefSeq" id="XP_001275153.1">
    <property type="nucleotide sequence ID" value="XM_001275152.1"/>
</dbReference>
<dbReference type="SMR" id="A1C8U0"/>
<dbReference type="STRING" id="344612.A1C8U0"/>
<dbReference type="EnsemblFungi" id="EAW13727">
    <property type="protein sequence ID" value="EAW13727"/>
    <property type="gene ID" value="ACLA_044470"/>
</dbReference>
<dbReference type="GeneID" id="4707278"/>
<dbReference type="KEGG" id="act:ACLA_044470"/>
<dbReference type="VEuPathDB" id="FungiDB:ACLA_044470"/>
<dbReference type="eggNOG" id="ENOG502QS4Q">
    <property type="taxonomic scope" value="Eukaryota"/>
</dbReference>
<dbReference type="HOGENOM" id="CLU_031603_4_1_1"/>
<dbReference type="OMA" id="YFQLHDK"/>
<dbReference type="OrthoDB" id="406631at2759"/>
<dbReference type="Proteomes" id="UP000006701">
    <property type="component" value="Unassembled WGS sequence"/>
</dbReference>
<dbReference type="GO" id="GO:0005576">
    <property type="term" value="C:extracellular region"/>
    <property type="evidence" value="ECO:0007669"/>
    <property type="project" value="UniProtKB-SubCell"/>
</dbReference>
<dbReference type="GO" id="GO:0030248">
    <property type="term" value="F:cellulose binding"/>
    <property type="evidence" value="ECO:0007669"/>
    <property type="project" value="InterPro"/>
</dbReference>
<dbReference type="GO" id="GO:0016985">
    <property type="term" value="F:mannan endo-1,4-beta-mannosidase activity"/>
    <property type="evidence" value="ECO:0007669"/>
    <property type="project" value="UniProtKB-EC"/>
</dbReference>
<dbReference type="GO" id="GO:0046355">
    <property type="term" value="P:mannan catabolic process"/>
    <property type="evidence" value="ECO:0007669"/>
    <property type="project" value="UniProtKB-ARBA"/>
</dbReference>
<dbReference type="FunFam" id="3.20.20.80:FF:000076">
    <property type="entry name" value="Mannan endo-1,4-beta-mannosidase A"/>
    <property type="match status" value="1"/>
</dbReference>
<dbReference type="Gene3D" id="3.20.20.80">
    <property type="entry name" value="Glycosidases"/>
    <property type="match status" value="1"/>
</dbReference>
<dbReference type="InterPro" id="IPR035971">
    <property type="entry name" value="CBD_sf"/>
</dbReference>
<dbReference type="InterPro" id="IPR000254">
    <property type="entry name" value="Cellulose-bd_dom_fun"/>
</dbReference>
<dbReference type="InterPro" id="IPR001547">
    <property type="entry name" value="Glyco_hydro_5"/>
</dbReference>
<dbReference type="InterPro" id="IPR017853">
    <property type="entry name" value="Glycoside_hydrolase_SF"/>
</dbReference>
<dbReference type="InterPro" id="IPR045053">
    <property type="entry name" value="MAN-like"/>
</dbReference>
<dbReference type="PANTHER" id="PTHR31451">
    <property type="match status" value="1"/>
</dbReference>
<dbReference type="PANTHER" id="PTHR31451:SF57">
    <property type="entry name" value="BETA-1,4-ENDOGLUCANASE (EUROFUNG)-RELATED"/>
    <property type="match status" value="1"/>
</dbReference>
<dbReference type="Pfam" id="PF00734">
    <property type="entry name" value="CBM_1"/>
    <property type="match status" value="1"/>
</dbReference>
<dbReference type="Pfam" id="PF00150">
    <property type="entry name" value="Cellulase"/>
    <property type="match status" value="1"/>
</dbReference>
<dbReference type="SMART" id="SM00236">
    <property type="entry name" value="fCBD"/>
    <property type="match status" value="1"/>
</dbReference>
<dbReference type="SUPFAM" id="SSF51445">
    <property type="entry name" value="(Trans)glycosidases"/>
    <property type="match status" value="1"/>
</dbReference>
<dbReference type="SUPFAM" id="SSF57180">
    <property type="entry name" value="Cellulose-binding domain"/>
    <property type="match status" value="1"/>
</dbReference>
<dbReference type="PROSITE" id="PS51164">
    <property type="entry name" value="CBM1_2"/>
    <property type="match status" value="1"/>
</dbReference>
<protein>
    <recommendedName>
        <fullName>Mannan endo-1,4-beta-mannosidase F</fullName>
        <ecNumber>3.2.1.78</ecNumber>
    </recommendedName>
    <alternativeName>
        <fullName>Endo-beta-1,4-mannanase F</fullName>
    </alternativeName>
</protein>
<evidence type="ECO:0000250" key="1"/>
<evidence type="ECO:0000250" key="2">
    <source>
        <dbReference type="UniProtKB" id="B4XC07"/>
    </source>
</evidence>
<evidence type="ECO:0000250" key="3">
    <source>
        <dbReference type="UniProtKB" id="Q99036"/>
    </source>
</evidence>
<evidence type="ECO:0000255" key="4"/>
<evidence type="ECO:0000255" key="5">
    <source>
        <dbReference type="PROSITE-ProRule" id="PRU00597"/>
    </source>
</evidence>
<evidence type="ECO:0000256" key="6">
    <source>
        <dbReference type="SAM" id="MobiDB-lite"/>
    </source>
</evidence>
<evidence type="ECO:0000305" key="7"/>
<name>MANF_ASPCL</name>
<sequence>MRSLSSVALLSAIGAASAQAGPWGQCAGISHTGPTTCESGWSCVYLNDWYSQCQPGAATSSSTTVSSTKQPSSTVAAPSSTTSAHTLPTGSGSFAKTDGLKFNIDGKTKYFAGTNAYWLPFLTNNADVDAVFDHLQQTGLKILRTWGFNDVNTIPGSGTVYFQLHDKATGTSTINTGANGLQRLDYVISAAEKHGIKLIIPFVNNWDDYGGMNAYINAYGGSKTEWYTNEKIQSVYQAYIKAIVSRYRDSPAIFAWELGNEPRCKGCSTDVIYNWVAKTSAYIKSLDPNHMVTTGEEGMGLTVDSDGSYPYSKDEGSDFARNLAAPDIDFGVYHLYVADWGVSDNAWGNRWIKSHAKVCEAAGKPCLFEEYGIKDDHCGDSLKWQKTSLTTTANSADLFWQYGQQLSTGASPNDHYTIYYGTDDWKCAVIDHISQI</sequence>
<accession>A1C8U0</accession>
<keyword id="KW-0119">Carbohydrate metabolism</keyword>
<keyword id="KW-0326">Glycosidase</keyword>
<keyword id="KW-0378">Hydrolase</keyword>
<keyword id="KW-1185">Reference proteome</keyword>
<keyword id="KW-0964">Secreted</keyword>
<keyword id="KW-0732">Signal</keyword>